<reference key="1">
    <citation type="journal article" date="2009" name="J. Bacteriol.">
        <title>Complete genome sequence of Erythrobacter litoralis HTCC2594.</title>
        <authorList>
            <person name="Oh H.M."/>
            <person name="Giovannoni S.J."/>
            <person name="Ferriera S."/>
            <person name="Johnson J."/>
            <person name="Cho J.C."/>
        </authorList>
    </citation>
    <scope>NUCLEOTIDE SEQUENCE [LARGE SCALE GENOMIC DNA]</scope>
    <source>
        <strain>HTCC2594</strain>
    </source>
</reference>
<name>RL10_ERYLH</name>
<keyword id="KW-1185">Reference proteome</keyword>
<keyword id="KW-0687">Ribonucleoprotein</keyword>
<keyword id="KW-0689">Ribosomal protein</keyword>
<keyword id="KW-0694">RNA-binding</keyword>
<keyword id="KW-0699">rRNA-binding</keyword>
<organism>
    <name type="scientific">Erythrobacter litoralis (strain HTCC2594)</name>
    <dbReference type="NCBI Taxonomy" id="314225"/>
    <lineage>
        <taxon>Bacteria</taxon>
        <taxon>Pseudomonadati</taxon>
        <taxon>Pseudomonadota</taxon>
        <taxon>Alphaproteobacteria</taxon>
        <taxon>Sphingomonadales</taxon>
        <taxon>Erythrobacteraceae</taxon>
        <taxon>Erythrobacter/Porphyrobacter group</taxon>
        <taxon>Erythrobacter</taxon>
    </lineage>
</organism>
<comment type="function">
    <text evidence="1">Forms part of the ribosomal stalk, playing a central role in the interaction of the ribosome with GTP-bound translation factors.</text>
</comment>
<comment type="subunit">
    <text evidence="1">Part of the ribosomal stalk of the 50S ribosomal subunit. The N-terminus interacts with L11 and the large rRNA to form the base of the stalk. The C-terminus forms an elongated spine to which L12 dimers bind in a sequential fashion forming a multimeric L10(L12)X complex.</text>
</comment>
<comment type="similarity">
    <text evidence="1">Belongs to the universal ribosomal protein uL10 family.</text>
</comment>
<dbReference type="EMBL" id="CP000157">
    <property type="protein sequence ID" value="ABC64977.1"/>
    <property type="molecule type" value="Genomic_DNA"/>
</dbReference>
<dbReference type="RefSeq" id="WP_011415799.1">
    <property type="nucleotide sequence ID" value="NC_007722.1"/>
</dbReference>
<dbReference type="SMR" id="Q2N5R4"/>
<dbReference type="STRING" id="314225.ELI_14425"/>
<dbReference type="KEGG" id="eli:ELI_14425"/>
<dbReference type="eggNOG" id="COG0244">
    <property type="taxonomic scope" value="Bacteria"/>
</dbReference>
<dbReference type="HOGENOM" id="CLU_092227_0_0_5"/>
<dbReference type="OrthoDB" id="9791972at2"/>
<dbReference type="Proteomes" id="UP000008808">
    <property type="component" value="Chromosome"/>
</dbReference>
<dbReference type="GO" id="GO:0015934">
    <property type="term" value="C:large ribosomal subunit"/>
    <property type="evidence" value="ECO:0007669"/>
    <property type="project" value="InterPro"/>
</dbReference>
<dbReference type="GO" id="GO:0070180">
    <property type="term" value="F:large ribosomal subunit rRNA binding"/>
    <property type="evidence" value="ECO:0007669"/>
    <property type="project" value="UniProtKB-UniRule"/>
</dbReference>
<dbReference type="GO" id="GO:0003735">
    <property type="term" value="F:structural constituent of ribosome"/>
    <property type="evidence" value="ECO:0007669"/>
    <property type="project" value="InterPro"/>
</dbReference>
<dbReference type="GO" id="GO:0006412">
    <property type="term" value="P:translation"/>
    <property type="evidence" value="ECO:0007669"/>
    <property type="project" value="UniProtKB-UniRule"/>
</dbReference>
<dbReference type="CDD" id="cd05797">
    <property type="entry name" value="Ribosomal_L10"/>
    <property type="match status" value="1"/>
</dbReference>
<dbReference type="Gene3D" id="3.30.70.1730">
    <property type="match status" value="1"/>
</dbReference>
<dbReference type="Gene3D" id="6.10.250.290">
    <property type="match status" value="1"/>
</dbReference>
<dbReference type="HAMAP" id="MF_00362">
    <property type="entry name" value="Ribosomal_uL10"/>
    <property type="match status" value="1"/>
</dbReference>
<dbReference type="InterPro" id="IPR001790">
    <property type="entry name" value="Ribosomal_uL10"/>
</dbReference>
<dbReference type="InterPro" id="IPR043141">
    <property type="entry name" value="Ribosomal_uL10-like_sf"/>
</dbReference>
<dbReference type="InterPro" id="IPR022973">
    <property type="entry name" value="Ribosomal_uL10_bac"/>
</dbReference>
<dbReference type="InterPro" id="IPR047865">
    <property type="entry name" value="Ribosomal_uL10_bac_type"/>
</dbReference>
<dbReference type="InterPro" id="IPR002363">
    <property type="entry name" value="Ribosomal_uL10_CS_bac"/>
</dbReference>
<dbReference type="NCBIfam" id="NF000955">
    <property type="entry name" value="PRK00099.1-1"/>
    <property type="match status" value="1"/>
</dbReference>
<dbReference type="PANTHER" id="PTHR11560">
    <property type="entry name" value="39S RIBOSOMAL PROTEIN L10, MITOCHONDRIAL"/>
    <property type="match status" value="1"/>
</dbReference>
<dbReference type="Pfam" id="PF00466">
    <property type="entry name" value="Ribosomal_L10"/>
    <property type="match status" value="1"/>
</dbReference>
<dbReference type="SUPFAM" id="SSF160369">
    <property type="entry name" value="Ribosomal protein L10-like"/>
    <property type="match status" value="1"/>
</dbReference>
<dbReference type="PROSITE" id="PS01109">
    <property type="entry name" value="RIBOSOMAL_L10"/>
    <property type="match status" value="1"/>
</dbReference>
<sequence>MDRSQKADAVAELNSVFNEAGVVVVTRNLGLTVAASTELRGKMREAGASYKVAKNRLAKLALKDTDYEGIGEMLTGPIALGYSADPVAAAKAAVDFAKSNDRLEIVGGSMGGQMLDEAGVKALASMPSLDELRGTIVGLINAPATKIAQVVTAPANKLARVFGAYGASEAA</sequence>
<feature type="chain" id="PRO_1000005496" description="Large ribosomal subunit protein uL10">
    <location>
        <begin position="1"/>
        <end position="171"/>
    </location>
</feature>
<gene>
    <name evidence="1" type="primary">rplJ</name>
    <name type="ordered locus">ELI_14425</name>
</gene>
<protein>
    <recommendedName>
        <fullName evidence="1">Large ribosomal subunit protein uL10</fullName>
    </recommendedName>
    <alternativeName>
        <fullName evidence="2">50S ribosomal protein L10</fullName>
    </alternativeName>
</protein>
<accession>Q2N5R4</accession>
<evidence type="ECO:0000255" key="1">
    <source>
        <dbReference type="HAMAP-Rule" id="MF_00362"/>
    </source>
</evidence>
<evidence type="ECO:0000305" key="2"/>
<proteinExistence type="inferred from homology"/>